<evidence type="ECO:0000303" key="1">
    <source>
    </source>
</evidence>
<sequence>MLLLRCQLKQAPPQKVSFRFCVVMGKQQSKLKHSTYKYGRPDEIIEERIQTKAFQEYSPAHMDTVSVVAALNSDLCVSGGKDKTVVAYNWKTGNVVKRFKGHEHEITKVACIPKSSQFFSASRDRMVMMWDLHGSSQPRQQLCGHAMVVTGLAVSPDSSQLCTGSRDNTLLLWDVVTGQSVERASVSRNVVTHLCWVPREPYILQTSEDKTLRLWDSRGLQVAHMFPAKQHIQTYCEVSVDGHKCISCSNGFGGEGCEATLWDLRQTRNRICEYKGHFQTVASCVFLPRALALMPLIATSSHDCKVKIWNQDTGACLFTLSLDGSGPLTSLAVGDAISLLCASFNRGIHLLRMDHSQGLELQEVAAF</sequence>
<gene>
    <name type="primary">WDR31</name>
</gene>
<protein>
    <recommendedName>
        <fullName>WD repeat-containing protein 31</fullName>
    </recommendedName>
</protein>
<organism>
    <name type="scientific">Homo sapiens</name>
    <name type="common">Human</name>
    <dbReference type="NCBI Taxonomy" id="9606"/>
    <lineage>
        <taxon>Eukaryota</taxon>
        <taxon>Metazoa</taxon>
        <taxon>Chordata</taxon>
        <taxon>Craniata</taxon>
        <taxon>Vertebrata</taxon>
        <taxon>Euteleostomi</taxon>
        <taxon>Mammalia</taxon>
        <taxon>Eutheria</taxon>
        <taxon>Euarchontoglires</taxon>
        <taxon>Primates</taxon>
        <taxon>Haplorrhini</taxon>
        <taxon>Catarrhini</taxon>
        <taxon>Hominidae</taxon>
        <taxon>Homo</taxon>
    </lineage>
</organism>
<keyword id="KW-0025">Alternative splicing</keyword>
<keyword id="KW-1267">Proteomics identification</keyword>
<keyword id="KW-1185">Reference proteome</keyword>
<keyword id="KW-0677">Repeat</keyword>
<keyword id="KW-0853">WD repeat</keyword>
<dbReference type="EMBL" id="AK093240">
    <property type="protein sequence ID" value="BAC04106.1"/>
    <property type="molecule type" value="mRNA"/>
</dbReference>
<dbReference type="EMBL" id="AL137066">
    <property type="status" value="NOT_ANNOTATED_CDS"/>
    <property type="molecule type" value="Genomic_DNA"/>
</dbReference>
<dbReference type="EMBL" id="AL449305">
    <property type="status" value="NOT_ANNOTATED_CDS"/>
    <property type="molecule type" value="Genomic_DNA"/>
</dbReference>
<dbReference type="EMBL" id="CH471090">
    <property type="protein sequence ID" value="EAW87368.1"/>
    <property type="molecule type" value="Genomic_DNA"/>
</dbReference>
<dbReference type="EMBL" id="BC012352">
    <property type="protein sequence ID" value="AAH12352.1"/>
    <property type="molecule type" value="mRNA"/>
</dbReference>
<dbReference type="CCDS" id="CCDS35110.1">
    <molecule id="Q8NA23-1"/>
</dbReference>
<dbReference type="CCDS" id="CCDS6792.1">
    <molecule id="Q8NA23-2"/>
</dbReference>
<dbReference type="RefSeq" id="NP_001012361.1">
    <molecule id="Q8NA23-1"/>
    <property type="nucleotide sequence ID" value="NM_001012361.4"/>
</dbReference>
<dbReference type="RefSeq" id="NP_660284.1">
    <molecule id="Q8NA23-2"/>
    <property type="nucleotide sequence ID" value="NM_145241.5"/>
</dbReference>
<dbReference type="RefSeq" id="XP_047278668.1">
    <molecule id="Q8NA23-1"/>
    <property type="nucleotide sequence ID" value="XM_047422712.1"/>
</dbReference>
<dbReference type="RefSeq" id="XP_047278669.1">
    <molecule id="Q8NA23-2"/>
    <property type="nucleotide sequence ID" value="XM_047422713.1"/>
</dbReference>
<dbReference type="RefSeq" id="XP_054217865.1">
    <molecule id="Q8NA23-1"/>
    <property type="nucleotide sequence ID" value="XM_054361890.1"/>
</dbReference>
<dbReference type="RefSeq" id="XP_054217866.1">
    <molecule id="Q8NA23-2"/>
    <property type="nucleotide sequence ID" value="XM_054361891.1"/>
</dbReference>
<dbReference type="SMR" id="Q8NA23"/>
<dbReference type="BioGRID" id="125405">
    <property type="interactions" value="1"/>
</dbReference>
<dbReference type="FunCoup" id="Q8NA23">
    <property type="interactions" value="60"/>
</dbReference>
<dbReference type="IntAct" id="Q8NA23">
    <property type="interactions" value="6"/>
</dbReference>
<dbReference type="STRING" id="9606.ENSP00000363308"/>
<dbReference type="iPTMnet" id="Q8NA23"/>
<dbReference type="PhosphoSitePlus" id="Q8NA23"/>
<dbReference type="BioMuta" id="WDR31"/>
<dbReference type="DMDM" id="47606186"/>
<dbReference type="MassIVE" id="Q8NA23"/>
<dbReference type="PaxDb" id="9606-ENSP00000363308"/>
<dbReference type="PeptideAtlas" id="Q8NA23"/>
<dbReference type="ProteomicsDB" id="72624">
    <molecule id="Q8NA23-1"/>
</dbReference>
<dbReference type="ProteomicsDB" id="72625">
    <molecule id="Q8NA23-2"/>
</dbReference>
<dbReference type="Antibodypedia" id="15294">
    <property type="antibodies" value="27 antibodies from 10 providers"/>
</dbReference>
<dbReference type="DNASU" id="114987"/>
<dbReference type="Ensembl" id="ENST00000341761.8">
    <molecule id="Q8NA23-2"/>
    <property type="protein sequence ID" value="ENSP00000345027.3"/>
    <property type="gene ID" value="ENSG00000148225.17"/>
</dbReference>
<dbReference type="Ensembl" id="ENST00000374193.9">
    <molecule id="Q8NA23-1"/>
    <property type="protein sequence ID" value="ENSP00000363308.3"/>
    <property type="gene ID" value="ENSG00000148225.17"/>
</dbReference>
<dbReference type="GeneID" id="114987"/>
<dbReference type="KEGG" id="hsa:114987"/>
<dbReference type="MANE-Select" id="ENST00000374193.9">
    <property type="protein sequence ID" value="ENSP00000363308.3"/>
    <property type="RefSeq nucleotide sequence ID" value="NM_001012361.4"/>
    <property type="RefSeq protein sequence ID" value="NP_001012361.1"/>
</dbReference>
<dbReference type="UCSC" id="uc004bhc.4">
    <molecule id="Q8NA23-1"/>
    <property type="organism name" value="human"/>
</dbReference>
<dbReference type="AGR" id="HGNC:21421"/>
<dbReference type="CTD" id="114987"/>
<dbReference type="DisGeNET" id="114987"/>
<dbReference type="GeneCards" id="WDR31"/>
<dbReference type="HGNC" id="HGNC:21421">
    <property type="gene designation" value="WDR31"/>
</dbReference>
<dbReference type="HPA" id="ENSG00000148225">
    <property type="expression patterns" value="Tissue enhanced (retina)"/>
</dbReference>
<dbReference type="MIM" id="620951">
    <property type="type" value="gene"/>
</dbReference>
<dbReference type="neXtProt" id="NX_Q8NA23"/>
<dbReference type="OpenTargets" id="ENSG00000148225"/>
<dbReference type="PharmGKB" id="PA134959062"/>
<dbReference type="VEuPathDB" id="HostDB:ENSG00000148225"/>
<dbReference type="eggNOG" id="KOG0279">
    <property type="taxonomic scope" value="Eukaryota"/>
</dbReference>
<dbReference type="GeneTree" id="ENSGT00910000144273"/>
<dbReference type="HOGENOM" id="CLU_061931_0_0_1"/>
<dbReference type="InParanoid" id="Q8NA23"/>
<dbReference type="OMA" id="KVICYPG"/>
<dbReference type="OrthoDB" id="6262491at2759"/>
<dbReference type="PAN-GO" id="Q8NA23">
    <property type="GO annotations" value="0 GO annotations based on evolutionary models"/>
</dbReference>
<dbReference type="PhylomeDB" id="Q8NA23"/>
<dbReference type="TreeFam" id="TF312936"/>
<dbReference type="PathwayCommons" id="Q8NA23"/>
<dbReference type="SignaLink" id="Q8NA23"/>
<dbReference type="BioGRID-ORCS" id="114987">
    <property type="hits" value="10 hits in 1150 CRISPR screens"/>
</dbReference>
<dbReference type="ChiTaRS" id="WDR31">
    <property type="organism name" value="human"/>
</dbReference>
<dbReference type="GenomeRNAi" id="114987"/>
<dbReference type="Pharos" id="Q8NA23">
    <property type="development level" value="Tdark"/>
</dbReference>
<dbReference type="PRO" id="PR:Q8NA23"/>
<dbReference type="Proteomes" id="UP000005640">
    <property type="component" value="Chromosome 9"/>
</dbReference>
<dbReference type="RNAct" id="Q8NA23">
    <property type="molecule type" value="protein"/>
</dbReference>
<dbReference type="Bgee" id="ENSG00000148225">
    <property type="expression patterns" value="Expressed in primordial germ cell in gonad and 109 other cell types or tissues"/>
</dbReference>
<dbReference type="ExpressionAtlas" id="Q8NA23">
    <property type="expression patterns" value="baseline and differential"/>
</dbReference>
<dbReference type="CDD" id="cd00200">
    <property type="entry name" value="WD40"/>
    <property type="match status" value="1"/>
</dbReference>
<dbReference type="Gene3D" id="2.130.10.10">
    <property type="entry name" value="YVTN repeat-like/Quinoprotein amine dehydrogenase"/>
    <property type="match status" value="2"/>
</dbReference>
<dbReference type="InterPro" id="IPR020472">
    <property type="entry name" value="G-protein_beta_WD-40_rep"/>
</dbReference>
<dbReference type="InterPro" id="IPR015943">
    <property type="entry name" value="WD40/YVTN_repeat-like_dom_sf"/>
</dbReference>
<dbReference type="InterPro" id="IPR019775">
    <property type="entry name" value="WD40_repeat_CS"/>
</dbReference>
<dbReference type="InterPro" id="IPR036322">
    <property type="entry name" value="WD40_repeat_dom_sf"/>
</dbReference>
<dbReference type="InterPro" id="IPR001680">
    <property type="entry name" value="WD40_rpt"/>
</dbReference>
<dbReference type="InterPro" id="IPR040066">
    <property type="entry name" value="WDR31"/>
</dbReference>
<dbReference type="PANTHER" id="PTHR19869">
    <property type="entry name" value="SPERMATID WD-REPEAT PROTEIN"/>
    <property type="match status" value="1"/>
</dbReference>
<dbReference type="PANTHER" id="PTHR19869:SF1">
    <property type="entry name" value="WD REPEAT-CONTAINING PROTEIN 31"/>
    <property type="match status" value="1"/>
</dbReference>
<dbReference type="Pfam" id="PF00400">
    <property type="entry name" value="WD40"/>
    <property type="match status" value="4"/>
</dbReference>
<dbReference type="PRINTS" id="PR00320">
    <property type="entry name" value="GPROTEINBRPT"/>
</dbReference>
<dbReference type="SMART" id="SM00320">
    <property type="entry name" value="WD40"/>
    <property type="match status" value="6"/>
</dbReference>
<dbReference type="SUPFAM" id="SSF50978">
    <property type="entry name" value="WD40 repeat-like"/>
    <property type="match status" value="1"/>
</dbReference>
<dbReference type="PROSITE" id="PS00678">
    <property type="entry name" value="WD_REPEATS_1"/>
    <property type="match status" value="1"/>
</dbReference>
<dbReference type="PROSITE" id="PS50082">
    <property type="entry name" value="WD_REPEATS_2"/>
    <property type="match status" value="4"/>
</dbReference>
<dbReference type="PROSITE" id="PS50294">
    <property type="entry name" value="WD_REPEATS_REGION"/>
    <property type="match status" value="1"/>
</dbReference>
<accession>Q8NA23</accession>
<accession>Q5W0T9</accession>
<accession>Q96EG8</accession>
<proteinExistence type="evidence at protein level"/>
<name>WDR31_HUMAN</name>
<comment type="interaction">
    <interactant intactId="EBI-25835937">
        <id>Q8NA23-2</id>
    </interactant>
    <interactant intactId="EBI-718729">
        <id>P55212</id>
        <label>CASP6</label>
    </interactant>
    <organismsDiffer>false</organismsDiffer>
    <experiments>3</experiments>
</comment>
<comment type="interaction">
    <interactant intactId="EBI-25835937">
        <id>Q8NA23-2</id>
    </interactant>
    <interactant intactId="EBI-10200977">
        <id>P21964-2</id>
        <label>COMT</label>
    </interactant>
    <organismsDiffer>false</organismsDiffer>
    <experiments>3</experiments>
</comment>
<comment type="interaction">
    <interactant intactId="EBI-25835937">
        <id>Q8NA23-2</id>
    </interactant>
    <interactant intactId="EBI-473886">
        <id>O00291</id>
        <label>HIP1</label>
    </interactant>
    <organismsDiffer>false</organismsDiffer>
    <experiments>3</experiments>
</comment>
<comment type="interaction">
    <interactant intactId="EBI-25835937">
        <id>Q8NA23-2</id>
    </interactant>
    <interactant intactId="EBI-21591415">
        <id>P13473-2</id>
        <label>LAMP2</label>
    </interactant>
    <organismsDiffer>false</organismsDiffer>
    <experiments>3</experiments>
</comment>
<comment type="interaction">
    <interactant intactId="EBI-25835937">
        <id>Q8NA23-2</id>
    </interactant>
    <interactant intactId="EBI-413034">
        <id>P0CG47</id>
        <label>UBB</label>
    </interactant>
    <organismsDiffer>false</organismsDiffer>
    <experiments>3</experiments>
</comment>
<comment type="alternative products">
    <event type="alternative splicing"/>
    <isoform>
        <id>Q8NA23-1</id>
        <name>1</name>
        <sequence type="displayed"/>
    </isoform>
    <isoform>
        <id>Q8NA23-2</id>
        <name>2</name>
        <sequence type="described" ref="VSP_010418"/>
    </isoform>
</comment>
<reference key="1">
    <citation type="journal article" date="2004" name="Nat. Genet.">
        <title>Complete sequencing and characterization of 21,243 full-length human cDNAs.</title>
        <authorList>
            <person name="Ota T."/>
            <person name="Suzuki Y."/>
            <person name="Nishikawa T."/>
            <person name="Otsuki T."/>
            <person name="Sugiyama T."/>
            <person name="Irie R."/>
            <person name="Wakamatsu A."/>
            <person name="Hayashi K."/>
            <person name="Sato H."/>
            <person name="Nagai K."/>
            <person name="Kimura K."/>
            <person name="Makita H."/>
            <person name="Sekine M."/>
            <person name="Obayashi M."/>
            <person name="Nishi T."/>
            <person name="Shibahara T."/>
            <person name="Tanaka T."/>
            <person name="Ishii S."/>
            <person name="Yamamoto J."/>
            <person name="Saito K."/>
            <person name="Kawai Y."/>
            <person name="Isono Y."/>
            <person name="Nakamura Y."/>
            <person name="Nagahari K."/>
            <person name="Murakami K."/>
            <person name="Yasuda T."/>
            <person name="Iwayanagi T."/>
            <person name="Wagatsuma M."/>
            <person name="Shiratori A."/>
            <person name="Sudo H."/>
            <person name="Hosoiri T."/>
            <person name="Kaku Y."/>
            <person name="Kodaira H."/>
            <person name="Kondo H."/>
            <person name="Sugawara M."/>
            <person name="Takahashi M."/>
            <person name="Kanda K."/>
            <person name="Yokoi T."/>
            <person name="Furuya T."/>
            <person name="Kikkawa E."/>
            <person name="Omura Y."/>
            <person name="Abe K."/>
            <person name="Kamihara K."/>
            <person name="Katsuta N."/>
            <person name="Sato K."/>
            <person name="Tanikawa M."/>
            <person name="Yamazaki M."/>
            <person name="Ninomiya K."/>
            <person name="Ishibashi T."/>
            <person name="Yamashita H."/>
            <person name="Murakawa K."/>
            <person name="Fujimori K."/>
            <person name="Tanai H."/>
            <person name="Kimata M."/>
            <person name="Watanabe M."/>
            <person name="Hiraoka S."/>
            <person name="Chiba Y."/>
            <person name="Ishida S."/>
            <person name="Ono Y."/>
            <person name="Takiguchi S."/>
            <person name="Watanabe S."/>
            <person name="Yosida M."/>
            <person name="Hotuta T."/>
            <person name="Kusano J."/>
            <person name="Kanehori K."/>
            <person name="Takahashi-Fujii A."/>
            <person name="Hara H."/>
            <person name="Tanase T.-O."/>
            <person name="Nomura Y."/>
            <person name="Togiya S."/>
            <person name="Komai F."/>
            <person name="Hara R."/>
            <person name="Takeuchi K."/>
            <person name="Arita M."/>
            <person name="Imose N."/>
            <person name="Musashino K."/>
            <person name="Yuuki H."/>
            <person name="Oshima A."/>
            <person name="Sasaki N."/>
            <person name="Aotsuka S."/>
            <person name="Yoshikawa Y."/>
            <person name="Matsunawa H."/>
            <person name="Ichihara T."/>
            <person name="Shiohata N."/>
            <person name="Sano S."/>
            <person name="Moriya S."/>
            <person name="Momiyama H."/>
            <person name="Satoh N."/>
            <person name="Takami S."/>
            <person name="Terashima Y."/>
            <person name="Suzuki O."/>
            <person name="Nakagawa S."/>
            <person name="Senoh A."/>
            <person name="Mizoguchi H."/>
            <person name="Goto Y."/>
            <person name="Shimizu F."/>
            <person name="Wakebe H."/>
            <person name="Hishigaki H."/>
            <person name="Watanabe T."/>
            <person name="Sugiyama A."/>
            <person name="Takemoto M."/>
            <person name="Kawakami B."/>
            <person name="Yamazaki M."/>
            <person name="Watanabe K."/>
            <person name="Kumagai A."/>
            <person name="Itakura S."/>
            <person name="Fukuzumi Y."/>
            <person name="Fujimori Y."/>
            <person name="Komiyama M."/>
            <person name="Tashiro H."/>
            <person name="Tanigami A."/>
            <person name="Fujiwara T."/>
            <person name="Ono T."/>
            <person name="Yamada K."/>
            <person name="Fujii Y."/>
            <person name="Ozaki K."/>
            <person name="Hirao M."/>
            <person name="Ohmori Y."/>
            <person name="Kawabata A."/>
            <person name="Hikiji T."/>
            <person name="Kobatake N."/>
            <person name="Inagaki H."/>
            <person name="Ikema Y."/>
            <person name="Okamoto S."/>
            <person name="Okitani R."/>
            <person name="Kawakami T."/>
            <person name="Noguchi S."/>
            <person name="Itoh T."/>
            <person name="Shigeta K."/>
            <person name="Senba T."/>
            <person name="Matsumura K."/>
            <person name="Nakajima Y."/>
            <person name="Mizuno T."/>
            <person name="Morinaga M."/>
            <person name="Sasaki M."/>
            <person name="Togashi T."/>
            <person name="Oyama M."/>
            <person name="Hata H."/>
            <person name="Watanabe M."/>
            <person name="Komatsu T."/>
            <person name="Mizushima-Sugano J."/>
            <person name="Satoh T."/>
            <person name="Shirai Y."/>
            <person name="Takahashi Y."/>
            <person name="Nakagawa K."/>
            <person name="Okumura K."/>
            <person name="Nagase T."/>
            <person name="Nomura N."/>
            <person name="Kikuchi H."/>
            <person name="Masuho Y."/>
            <person name="Yamashita R."/>
            <person name="Nakai K."/>
            <person name="Yada T."/>
            <person name="Nakamura Y."/>
            <person name="Ohara O."/>
            <person name="Isogai T."/>
            <person name="Sugano S."/>
        </authorList>
    </citation>
    <scope>NUCLEOTIDE SEQUENCE [LARGE SCALE MRNA] (ISOFORM 1)</scope>
    <source>
        <tissue>Testis</tissue>
    </source>
</reference>
<reference key="2">
    <citation type="journal article" date="2004" name="Nature">
        <title>DNA sequence and analysis of human chromosome 9.</title>
        <authorList>
            <person name="Humphray S.J."/>
            <person name="Oliver K."/>
            <person name="Hunt A.R."/>
            <person name="Plumb R.W."/>
            <person name="Loveland J.E."/>
            <person name="Howe K.L."/>
            <person name="Andrews T.D."/>
            <person name="Searle S."/>
            <person name="Hunt S.E."/>
            <person name="Scott C.E."/>
            <person name="Jones M.C."/>
            <person name="Ainscough R."/>
            <person name="Almeida J.P."/>
            <person name="Ambrose K.D."/>
            <person name="Ashwell R.I.S."/>
            <person name="Babbage A.K."/>
            <person name="Babbage S."/>
            <person name="Bagguley C.L."/>
            <person name="Bailey J."/>
            <person name="Banerjee R."/>
            <person name="Barker D.J."/>
            <person name="Barlow K.F."/>
            <person name="Bates K."/>
            <person name="Beasley H."/>
            <person name="Beasley O."/>
            <person name="Bird C.P."/>
            <person name="Bray-Allen S."/>
            <person name="Brown A.J."/>
            <person name="Brown J.Y."/>
            <person name="Burford D."/>
            <person name="Burrill W."/>
            <person name="Burton J."/>
            <person name="Carder C."/>
            <person name="Carter N.P."/>
            <person name="Chapman J.C."/>
            <person name="Chen Y."/>
            <person name="Clarke G."/>
            <person name="Clark S.Y."/>
            <person name="Clee C.M."/>
            <person name="Clegg S."/>
            <person name="Collier R.E."/>
            <person name="Corby N."/>
            <person name="Crosier M."/>
            <person name="Cummings A.T."/>
            <person name="Davies J."/>
            <person name="Dhami P."/>
            <person name="Dunn M."/>
            <person name="Dutta I."/>
            <person name="Dyer L.W."/>
            <person name="Earthrowl M.E."/>
            <person name="Faulkner L."/>
            <person name="Fleming C.J."/>
            <person name="Frankish A."/>
            <person name="Frankland J.A."/>
            <person name="French L."/>
            <person name="Fricker D.G."/>
            <person name="Garner P."/>
            <person name="Garnett J."/>
            <person name="Ghori J."/>
            <person name="Gilbert J.G.R."/>
            <person name="Glison C."/>
            <person name="Grafham D.V."/>
            <person name="Gribble S."/>
            <person name="Griffiths C."/>
            <person name="Griffiths-Jones S."/>
            <person name="Grocock R."/>
            <person name="Guy J."/>
            <person name="Hall R.E."/>
            <person name="Hammond S."/>
            <person name="Harley J.L."/>
            <person name="Harrison E.S.I."/>
            <person name="Hart E.A."/>
            <person name="Heath P.D."/>
            <person name="Henderson C.D."/>
            <person name="Hopkins B.L."/>
            <person name="Howard P.J."/>
            <person name="Howden P.J."/>
            <person name="Huckle E."/>
            <person name="Johnson C."/>
            <person name="Johnson D."/>
            <person name="Joy A.A."/>
            <person name="Kay M."/>
            <person name="Keenan S."/>
            <person name="Kershaw J.K."/>
            <person name="Kimberley A.M."/>
            <person name="King A."/>
            <person name="Knights A."/>
            <person name="Laird G.K."/>
            <person name="Langford C."/>
            <person name="Lawlor S."/>
            <person name="Leongamornlert D.A."/>
            <person name="Leversha M."/>
            <person name="Lloyd C."/>
            <person name="Lloyd D.M."/>
            <person name="Lovell J."/>
            <person name="Martin S."/>
            <person name="Mashreghi-Mohammadi M."/>
            <person name="Matthews L."/>
            <person name="McLaren S."/>
            <person name="McLay K.E."/>
            <person name="McMurray A."/>
            <person name="Milne S."/>
            <person name="Nickerson T."/>
            <person name="Nisbett J."/>
            <person name="Nordsiek G."/>
            <person name="Pearce A.V."/>
            <person name="Peck A.I."/>
            <person name="Porter K.M."/>
            <person name="Pandian R."/>
            <person name="Pelan S."/>
            <person name="Phillimore B."/>
            <person name="Povey S."/>
            <person name="Ramsey Y."/>
            <person name="Rand V."/>
            <person name="Scharfe M."/>
            <person name="Sehra H.K."/>
            <person name="Shownkeen R."/>
            <person name="Sims S.K."/>
            <person name="Skuce C.D."/>
            <person name="Smith M."/>
            <person name="Steward C.A."/>
            <person name="Swarbreck D."/>
            <person name="Sycamore N."/>
            <person name="Tester J."/>
            <person name="Thorpe A."/>
            <person name="Tracey A."/>
            <person name="Tromans A."/>
            <person name="Thomas D.W."/>
            <person name="Wall M."/>
            <person name="Wallis J.M."/>
            <person name="West A.P."/>
            <person name="Whitehead S.L."/>
            <person name="Willey D.L."/>
            <person name="Williams S.A."/>
            <person name="Wilming L."/>
            <person name="Wray P.W."/>
            <person name="Young L."/>
            <person name="Ashurst J.L."/>
            <person name="Coulson A."/>
            <person name="Blocker H."/>
            <person name="Durbin R.M."/>
            <person name="Sulston J.E."/>
            <person name="Hubbard T."/>
            <person name="Jackson M.J."/>
            <person name="Bentley D.R."/>
            <person name="Beck S."/>
            <person name="Rogers J."/>
            <person name="Dunham I."/>
        </authorList>
    </citation>
    <scope>NUCLEOTIDE SEQUENCE [LARGE SCALE GENOMIC DNA]</scope>
</reference>
<reference key="3">
    <citation type="submission" date="2005-07" db="EMBL/GenBank/DDBJ databases">
        <authorList>
            <person name="Mural R.J."/>
            <person name="Istrail S."/>
            <person name="Sutton G.G."/>
            <person name="Florea L."/>
            <person name="Halpern A.L."/>
            <person name="Mobarry C.M."/>
            <person name="Lippert R."/>
            <person name="Walenz B."/>
            <person name="Shatkay H."/>
            <person name="Dew I."/>
            <person name="Miller J.R."/>
            <person name="Flanigan M.J."/>
            <person name="Edwards N.J."/>
            <person name="Bolanos R."/>
            <person name="Fasulo D."/>
            <person name="Halldorsson B.V."/>
            <person name="Hannenhalli S."/>
            <person name="Turner R."/>
            <person name="Yooseph S."/>
            <person name="Lu F."/>
            <person name="Nusskern D.R."/>
            <person name="Shue B.C."/>
            <person name="Zheng X.H."/>
            <person name="Zhong F."/>
            <person name="Delcher A.L."/>
            <person name="Huson D.H."/>
            <person name="Kravitz S.A."/>
            <person name="Mouchard L."/>
            <person name="Reinert K."/>
            <person name="Remington K.A."/>
            <person name="Clark A.G."/>
            <person name="Waterman M.S."/>
            <person name="Eichler E.E."/>
            <person name="Adams M.D."/>
            <person name="Hunkapiller M.W."/>
            <person name="Myers E.W."/>
            <person name="Venter J.C."/>
        </authorList>
    </citation>
    <scope>NUCLEOTIDE SEQUENCE [LARGE SCALE GENOMIC DNA]</scope>
</reference>
<reference key="4">
    <citation type="journal article" date="2004" name="Genome Res.">
        <title>The status, quality, and expansion of the NIH full-length cDNA project: the Mammalian Gene Collection (MGC).</title>
        <authorList>
            <consortium name="The MGC Project Team"/>
        </authorList>
    </citation>
    <scope>NUCLEOTIDE SEQUENCE [LARGE SCALE MRNA] (ISOFORM 2)</scope>
    <source>
        <tissue>Eye</tissue>
    </source>
</reference>
<feature type="chain" id="PRO_0000051380" description="WD repeat-containing protein 31">
    <location>
        <begin position="1"/>
        <end position="367"/>
    </location>
</feature>
<feature type="repeat" description="WD 1">
    <location>
        <begin position="53"/>
        <end position="90"/>
    </location>
</feature>
<feature type="repeat" description="WD 2">
    <location>
        <begin position="94"/>
        <end position="132"/>
    </location>
</feature>
<feature type="repeat" description="WD 3">
    <location>
        <begin position="137"/>
        <end position="175"/>
    </location>
</feature>
<feature type="repeat" description="WD 4">
    <location>
        <begin position="179"/>
        <end position="217"/>
    </location>
</feature>
<feature type="repeat" description="WD 5">
    <location>
        <begin position="221"/>
        <end position="264"/>
    </location>
</feature>
<feature type="repeat" description="WD 6">
    <location>
        <begin position="269"/>
        <end position="311"/>
    </location>
</feature>
<feature type="repeat" description="WD 7">
    <location>
        <begin position="315"/>
        <end position="353"/>
    </location>
</feature>
<feature type="splice variant" id="VSP_010418" description="In isoform 2." evidence="1">
    <location>
        <position position="40"/>
    </location>
</feature>
<feature type="sequence variant" id="VAR_053426" description="In dbSNP:rs10817479.">
    <original>P</original>
    <variation>S</variation>
    <location>
        <position position="113"/>
    </location>
</feature>